<sequence length="152" mass="17674">MNPQSMKEQIRLDIELAVQRRVAVSVGDRFGTQSALFRRQFDEANAVSHRVQQTERLRAIKNKVVYLTTEIENRTKEVESLIRFDPKKVDILEELTDKVEELEANVSFEVDRIQGYQERYHGGQQTSLPDCNGELETTLTQWRLEQAPRCPP</sequence>
<evidence type="ECO:0000255" key="1"/>
<evidence type="ECO:0000305" key="2"/>
<accession>O36384</accession>
<gene>
    <name type="primary">35</name>
</gene>
<organismHost>
    <name type="scientific">Connochaetes taurinus</name>
    <name type="common">Blue wildebeest</name>
    <dbReference type="NCBI Taxonomy" id="9927"/>
</organismHost>
<feature type="chain" id="PRO_0000405771" description="Gene 35 protein">
    <location>
        <begin position="1"/>
        <end position="152"/>
    </location>
</feature>
<feature type="coiled-coil region" evidence="1">
    <location>
        <begin position="86"/>
        <end position="120"/>
    </location>
</feature>
<keyword id="KW-0175">Coiled coil</keyword>
<keyword id="KW-1185">Reference proteome</keyword>
<name>UL96_ALHV1</name>
<dbReference type="EMBL" id="AF005370">
    <property type="protein sequence ID" value="AAC58081.1"/>
    <property type="molecule type" value="Genomic_DNA"/>
</dbReference>
<dbReference type="PIR" id="T03129">
    <property type="entry name" value="T03129"/>
</dbReference>
<dbReference type="RefSeq" id="NP_065533.1">
    <property type="nucleotide sequence ID" value="NC_002531.1"/>
</dbReference>
<dbReference type="SMR" id="O36384"/>
<dbReference type="KEGG" id="vg:911798"/>
<dbReference type="Proteomes" id="UP000000941">
    <property type="component" value="Segment"/>
</dbReference>
<dbReference type="InterPro" id="IPR008566">
    <property type="entry name" value="DUF848"/>
</dbReference>
<dbReference type="Pfam" id="PF05852">
    <property type="entry name" value="DUF848"/>
    <property type="match status" value="1"/>
</dbReference>
<protein>
    <recommendedName>
        <fullName>Gene 35 protein</fullName>
    </recommendedName>
</protein>
<proteinExistence type="inferred from homology"/>
<comment type="similarity">
    <text evidence="2">Belongs to the herpesviridae UL96 family.</text>
</comment>
<organism>
    <name type="scientific">Alcelaphine herpesvirus 1 (strain C500)</name>
    <name type="common">AlHV-1</name>
    <name type="synonym">Malignant catarrhal fever virus</name>
    <dbReference type="NCBI Taxonomy" id="654901"/>
    <lineage>
        <taxon>Viruses</taxon>
        <taxon>Duplodnaviria</taxon>
        <taxon>Heunggongvirae</taxon>
        <taxon>Peploviricota</taxon>
        <taxon>Herviviricetes</taxon>
        <taxon>Herpesvirales</taxon>
        <taxon>Orthoherpesviridae</taxon>
        <taxon>Gammaherpesvirinae</taxon>
        <taxon>Macavirus</taxon>
        <taxon>Macavirus alcelaphinegamma1</taxon>
    </lineage>
</organism>
<reference key="1">
    <citation type="journal article" date="1997" name="J. Virol.">
        <title>Primary structure of the alcelaphine herpesvirus 1 genome.</title>
        <authorList>
            <person name="Ensser A."/>
            <person name="Pflanz R."/>
            <person name="Fleckenstein B."/>
        </authorList>
    </citation>
    <scope>NUCLEOTIDE SEQUENCE [LARGE SCALE GENOMIC DNA]</scope>
</reference>